<reference key="1">
    <citation type="journal article" date="2006" name="J. Bacteriol.">
        <title>Comparative genomic analysis of three strains of Ehrlichia ruminantium reveals an active process of genome size plasticity.</title>
        <authorList>
            <person name="Frutos R."/>
            <person name="Viari A."/>
            <person name="Ferraz C."/>
            <person name="Morgat A."/>
            <person name="Eychenie S."/>
            <person name="Kandassamy Y."/>
            <person name="Chantal I."/>
            <person name="Bensaid A."/>
            <person name="Coissac E."/>
            <person name="Vachiery N."/>
            <person name="Demaille J."/>
            <person name="Martinez D."/>
        </authorList>
    </citation>
    <scope>NUCLEOTIDE SEQUENCE [LARGE SCALE GENOMIC DNA]</scope>
    <source>
        <strain>Gardel</strain>
    </source>
</reference>
<evidence type="ECO:0000255" key="1">
    <source>
        <dbReference type="HAMAP-Rule" id="MF_00041"/>
    </source>
</evidence>
<gene>
    <name evidence="1" type="primary">cysS</name>
    <name type="ordered locus">ERGA_CDS_03270</name>
</gene>
<sequence>MIIYNTLTRSKELFVPLDVNNVKIYVCGPTVYDFAHIGNSRSIVIYDILFRLLNVLYPKVTYIRNITDIDDKIINVAQNNNQNIYDVTARYIKAFNEDMGRLNCLKPTYEPRATENIDVMLALIEKLINYGHAYIRDNTVFFDIQSYPAYGKLSGRNIMELIYGSRIDIEVGKKHPGDFVLWKPATDIDSKLMSCWPSPWGVGRPGWHIECSAMSYNYLGENFDIHGGGADLQFPHHENELAQSCCAFPNSYYAKYWIHNGFLTVNHEKMSKSLGNFLTVRQLLDSGIRGEVIRYIFLSTHYRKPLDWNDNVVSSAQESLNRIYMALNVTDERLLLDDVEVSDEIISCLKDDMNTPKAIAVLHEMVTRINKASDIDKKVYFIKVLIKSANFLGILHHSWQEWFKVDNDQDIIQLIHERKMAKTNGDFIKADRIRQILLDKGIVLSDNKDGTTLWYRS</sequence>
<accession>Q5FHI9</accession>
<comment type="catalytic activity">
    <reaction evidence="1">
        <text>tRNA(Cys) + L-cysteine + ATP = L-cysteinyl-tRNA(Cys) + AMP + diphosphate</text>
        <dbReference type="Rhea" id="RHEA:17773"/>
        <dbReference type="Rhea" id="RHEA-COMP:9661"/>
        <dbReference type="Rhea" id="RHEA-COMP:9679"/>
        <dbReference type="ChEBI" id="CHEBI:30616"/>
        <dbReference type="ChEBI" id="CHEBI:33019"/>
        <dbReference type="ChEBI" id="CHEBI:35235"/>
        <dbReference type="ChEBI" id="CHEBI:78442"/>
        <dbReference type="ChEBI" id="CHEBI:78517"/>
        <dbReference type="ChEBI" id="CHEBI:456215"/>
        <dbReference type="EC" id="6.1.1.16"/>
    </reaction>
</comment>
<comment type="cofactor">
    <cofactor evidence="1">
        <name>Zn(2+)</name>
        <dbReference type="ChEBI" id="CHEBI:29105"/>
    </cofactor>
    <text evidence="1">Binds 1 zinc ion per subunit.</text>
</comment>
<comment type="subunit">
    <text evidence="1">Monomer.</text>
</comment>
<comment type="subcellular location">
    <subcellularLocation>
        <location evidence="1">Cytoplasm</location>
    </subcellularLocation>
</comment>
<comment type="similarity">
    <text evidence="1">Belongs to the class-I aminoacyl-tRNA synthetase family.</text>
</comment>
<proteinExistence type="inferred from homology"/>
<name>SYC_EHRRG</name>
<keyword id="KW-0030">Aminoacyl-tRNA synthetase</keyword>
<keyword id="KW-0067">ATP-binding</keyword>
<keyword id="KW-0963">Cytoplasm</keyword>
<keyword id="KW-0436">Ligase</keyword>
<keyword id="KW-0479">Metal-binding</keyword>
<keyword id="KW-0547">Nucleotide-binding</keyword>
<keyword id="KW-0648">Protein biosynthesis</keyword>
<keyword id="KW-0862">Zinc</keyword>
<protein>
    <recommendedName>
        <fullName evidence="1">Cysteine--tRNA ligase</fullName>
        <ecNumber evidence="1">6.1.1.16</ecNumber>
    </recommendedName>
    <alternativeName>
        <fullName evidence="1">Cysteinyl-tRNA synthetase</fullName>
        <shortName evidence="1">CysRS</shortName>
    </alternativeName>
</protein>
<organism>
    <name type="scientific">Ehrlichia ruminantium (strain Gardel)</name>
    <dbReference type="NCBI Taxonomy" id="302409"/>
    <lineage>
        <taxon>Bacteria</taxon>
        <taxon>Pseudomonadati</taxon>
        <taxon>Pseudomonadota</taxon>
        <taxon>Alphaproteobacteria</taxon>
        <taxon>Rickettsiales</taxon>
        <taxon>Anaplasmataceae</taxon>
        <taxon>Ehrlichia</taxon>
    </lineage>
</organism>
<feature type="chain" id="PRO_0000240912" description="Cysteine--tRNA ligase">
    <location>
        <begin position="1"/>
        <end position="457"/>
    </location>
</feature>
<feature type="short sequence motif" description="'HIGH' region">
    <location>
        <begin position="29"/>
        <end position="39"/>
    </location>
</feature>
<feature type="short sequence motif" description="'KMSKS' region">
    <location>
        <begin position="269"/>
        <end position="273"/>
    </location>
</feature>
<feature type="binding site" evidence="1">
    <location>
        <position position="27"/>
    </location>
    <ligand>
        <name>Zn(2+)</name>
        <dbReference type="ChEBI" id="CHEBI:29105"/>
    </ligand>
</feature>
<feature type="binding site" evidence="1">
    <location>
        <position position="211"/>
    </location>
    <ligand>
        <name>Zn(2+)</name>
        <dbReference type="ChEBI" id="CHEBI:29105"/>
    </ligand>
</feature>
<feature type="binding site" evidence="1">
    <location>
        <position position="236"/>
    </location>
    <ligand>
        <name>Zn(2+)</name>
        <dbReference type="ChEBI" id="CHEBI:29105"/>
    </ligand>
</feature>
<feature type="binding site" evidence="1">
    <location>
        <position position="240"/>
    </location>
    <ligand>
        <name>Zn(2+)</name>
        <dbReference type="ChEBI" id="CHEBI:29105"/>
    </ligand>
</feature>
<feature type="binding site" evidence="1">
    <location>
        <position position="272"/>
    </location>
    <ligand>
        <name>ATP</name>
        <dbReference type="ChEBI" id="CHEBI:30616"/>
    </ligand>
</feature>
<dbReference type="EC" id="6.1.1.16" evidence="1"/>
<dbReference type="EMBL" id="CR925677">
    <property type="protein sequence ID" value="CAI27779.1"/>
    <property type="molecule type" value="Genomic_DNA"/>
</dbReference>
<dbReference type="RefSeq" id="WP_011255478.1">
    <property type="nucleotide sequence ID" value="NC_006831.1"/>
</dbReference>
<dbReference type="SMR" id="Q5FHI9"/>
<dbReference type="KEGG" id="erg:ERGA_CDS_03270"/>
<dbReference type="HOGENOM" id="CLU_013528_0_1_5"/>
<dbReference type="OrthoDB" id="9815130at2"/>
<dbReference type="Proteomes" id="UP000000533">
    <property type="component" value="Chromosome"/>
</dbReference>
<dbReference type="GO" id="GO:0005829">
    <property type="term" value="C:cytosol"/>
    <property type="evidence" value="ECO:0007669"/>
    <property type="project" value="TreeGrafter"/>
</dbReference>
<dbReference type="GO" id="GO:0005524">
    <property type="term" value="F:ATP binding"/>
    <property type="evidence" value="ECO:0007669"/>
    <property type="project" value="UniProtKB-UniRule"/>
</dbReference>
<dbReference type="GO" id="GO:0004817">
    <property type="term" value="F:cysteine-tRNA ligase activity"/>
    <property type="evidence" value="ECO:0007669"/>
    <property type="project" value="UniProtKB-UniRule"/>
</dbReference>
<dbReference type="GO" id="GO:0008270">
    <property type="term" value="F:zinc ion binding"/>
    <property type="evidence" value="ECO:0007669"/>
    <property type="project" value="UniProtKB-UniRule"/>
</dbReference>
<dbReference type="GO" id="GO:0006423">
    <property type="term" value="P:cysteinyl-tRNA aminoacylation"/>
    <property type="evidence" value="ECO:0007669"/>
    <property type="project" value="UniProtKB-UniRule"/>
</dbReference>
<dbReference type="CDD" id="cd00672">
    <property type="entry name" value="CysRS_core"/>
    <property type="match status" value="1"/>
</dbReference>
<dbReference type="Gene3D" id="1.20.120.1910">
    <property type="entry name" value="Cysteine-tRNA ligase, C-terminal anti-codon recognition domain"/>
    <property type="match status" value="1"/>
</dbReference>
<dbReference type="Gene3D" id="3.40.50.620">
    <property type="entry name" value="HUPs"/>
    <property type="match status" value="1"/>
</dbReference>
<dbReference type="HAMAP" id="MF_00041">
    <property type="entry name" value="Cys_tRNA_synth"/>
    <property type="match status" value="1"/>
</dbReference>
<dbReference type="InterPro" id="IPR015803">
    <property type="entry name" value="Cys-tRNA-ligase"/>
</dbReference>
<dbReference type="InterPro" id="IPR015273">
    <property type="entry name" value="Cys-tRNA-synt_Ia_DALR"/>
</dbReference>
<dbReference type="InterPro" id="IPR024909">
    <property type="entry name" value="Cys-tRNA/MSH_ligase"/>
</dbReference>
<dbReference type="InterPro" id="IPR014729">
    <property type="entry name" value="Rossmann-like_a/b/a_fold"/>
</dbReference>
<dbReference type="InterPro" id="IPR032678">
    <property type="entry name" value="tRNA-synt_1_cat_dom"/>
</dbReference>
<dbReference type="InterPro" id="IPR009080">
    <property type="entry name" value="tRNAsynth_Ia_anticodon-bd"/>
</dbReference>
<dbReference type="NCBIfam" id="TIGR00435">
    <property type="entry name" value="cysS"/>
    <property type="match status" value="1"/>
</dbReference>
<dbReference type="PANTHER" id="PTHR10890:SF3">
    <property type="entry name" value="CYSTEINE--TRNA LIGASE, CYTOPLASMIC"/>
    <property type="match status" value="1"/>
</dbReference>
<dbReference type="PANTHER" id="PTHR10890">
    <property type="entry name" value="CYSTEINYL-TRNA SYNTHETASE"/>
    <property type="match status" value="1"/>
</dbReference>
<dbReference type="Pfam" id="PF09190">
    <property type="entry name" value="DALR_2"/>
    <property type="match status" value="1"/>
</dbReference>
<dbReference type="Pfam" id="PF01406">
    <property type="entry name" value="tRNA-synt_1e"/>
    <property type="match status" value="1"/>
</dbReference>
<dbReference type="PRINTS" id="PR00983">
    <property type="entry name" value="TRNASYNTHCYS"/>
</dbReference>
<dbReference type="SMART" id="SM00840">
    <property type="entry name" value="DALR_2"/>
    <property type="match status" value="1"/>
</dbReference>
<dbReference type="SUPFAM" id="SSF47323">
    <property type="entry name" value="Anticodon-binding domain of a subclass of class I aminoacyl-tRNA synthetases"/>
    <property type="match status" value="1"/>
</dbReference>
<dbReference type="SUPFAM" id="SSF52374">
    <property type="entry name" value="Nucleotidylyl transferase"/>
    <property type="match status" value="1"/>
</dbReference>